<feature type="chain" id="PRO_0000203951" description="Tagatose 1,6-diphosphate aldolase">
    <location>
        <begin position="1"/>
        <end position="325"/>
    </location>
</feature>
<dbReference type="EC" id="4.1.2.40" evidence="1"/>
<dbReference type="EMBL" id="AE015929">
    <property type="protein sequence ID" value="AAO05425.1"/>
    <property type="molecule type" value="Genomic_DNA"/>
</dbReference>
<dbReference type="RefSeq" id="NP_765339.1">
    <property type="nucleotide sequence ID" value="NC_004461.1"/>
</dbReference>
<dbReference type="RefSeq" id="WP_011082764.1">
    <property type="nucleotide sequence ID" value="NZ_WBME01000007.1"/>
</dbReference>
<dbReference type="SMR" id="Q8CNF5"/>
<dbReference type="KEGG" id="sep:SE_1784"/>
<dbReference type="PATRIC" id="fig|176280.10.peg.1741"/>
<dbReference type="eggNOG" id="COG3684">
    <property type="taxonomic scope" value="Bacteria"/>
</dbReference>
<dbReference type="HOGENOM" id="CLU_058971_0_1_9"/>
<dbReference type="OrthoDB" id="106309at2"/>
<dbReference type="UniPathway" id="UPA00704">
    <property type="reaction ID" value="UER00716"/>
</dbReference>
<dbReference type="Proteomes" id="UP000001411">
    <property type="component" value="Chromosome"/>
</dbReference>
<dbReference type="GO" id="GO:0061595">
    <property type="term" value="F:6-deoxy-6-sulfofructose-1-phosphate aldolase activity"/>
    <property type="evidence" value="ECO:0007669"/>
    <property type="project" value="TreeGrafter"/>
</dbReference>
<dbReference type="GO" id="GO:0009024">
    <property type="term" value="F:tagatose-6-phosphate kinase activity"/>
    <property type="evidence" value="ECO:0007669"/>
    <property type="project" value="InterPro"/>
</dbReference>
<dbReference type="GO" id="GO:0009025">
    <property type="term" value="F:tagatose-bisphosphate aldolase activity"/>
    <property type="evidence" value="ECO:0007669"/>
    <property type="project" value="UniProtKB-UniRule"/>
</dbReference>
<dbReference type="GO" id="GO:1902777">
    <property type="term" value="P:6-sulfoquinovose(1-) catabolic process"/>
    <property type="evidence" value="ECO:0007669"/>
    <property type="project" value="TreeGrafter"/>
</dbReference>
<dbReference type="GO" id="GO:2001059">
    <property type="term" value="P:D-tagatose 6-phosphate catabolic process"/>
    <property type="evidence" value="ECO:0007669"/>
    <property type="project" value="UniProtKB-UniRule"/>
</dbReference>
<dbReference type="GO" id="GO:0019512">
    <property type="term" value="P:lactose catabolic process via tagatose-6-phosphate"/>
    <property type="evidence" value="ECO:0007669"/>
    <property type="project" value="InterPro"/>
</dbReference>
<dbReference type="FunFam" id="3.20.20.70:FF:000137">
    <property type="entry name" value="Tagatose 1,6-diphosphate aldolase 2"/>
    <property type="match status" value="1"/>
</dbReference>
<dbReference type="Gene3D" id="3.20.20.70">
    <property type="entry name" value="Aldolase class I"/>
    <property type="match status" value="1"/>
</dbReference>
<dbReference type="HAMAP" id="MF_00734">
    <property type="entry name" value="LacD"/>
    <property type="match status" value="1"/>
</dbReference>
<dbReference type="InterPro" id="IPR013785">
    <property type="entry name" value="Aldolase_TIM"/>
</dbReference>
<dbReference type="InterPro" id="IPR002915">
    <property type="entry name" value="DeoC/FbaB/LacD_aldolase"/>
</dbReference>
<dbReference type="InterPro" id="IPR050552">
    <property type="entry name" value="LacD_aldolase"/>
</dbReference>
<dbReference type="InterPro" id="IPR005927">
    <property type="entry name" value="Tag_1.6-dipho_adolase"/>
</dbReference>
<dbReference type="NCBIfam" id="TIGR01232">
    <property type="entry name" value="lacD"/>
    <property type="match status" value="1"/>
</dbReference>
<dbReference type="NCBIfam" id="NF003180">
    <property type="entry name" value="PRK04161.1"/>
    <property type="match status" value="1"/>
</dbReference>
<dbReference type="NCBIfam" id="NF009065">
    <property type="entry name" value="PRK12399.1"/>
    <property type="match status" value="1"/>
</dbReference>
<dbReference type="NCBIfam" id="NF009498">
    <property type="entry name" value="PRK12858.1"/>
    <property type="match status" value="1"/>
</dbReference>
<dbReference type="PANTHER" id="PTHR39340">
    <property type="entry name" value="SULFOFRUCTOSEPHOSPHATE ALDOLASE"/>
    <property type="match status" value="1"/>
</dbReference>
<dbReference type="PANTHER" id="PTHR39340:SF1">
    <property type="entry name" value="SULFOFRUCTOSEPHOSPHATE ALDOLASE"/>
    <property type="match status" value="1"/>
</dbReference>
<dbReference type="Pfam" id="PF01791">
    <property type="entry name" value="DeoC"/>
    <property type="match status" value="1"/>
</dbReference>
<dbReference type="SMART" id="SM01133">
    <property type="entry name" value="DeoC"/>
    <property type="match status" value="1"/>
</dbReference>
<dbReference type="SUPFAM" id="SSF51569">
    <property type="entry name" value="Aldolase"/>
    <property type="match status" value="1"/>
</dbReference>
<organism>
    <name type="scientific">Staphylococcus epidermidis (strain ATCC 12228 / FDA PCI 1200)</name>
    <dbReference type="NCBI Taxonomy" id="176280"/>
    <lineage>
        <taxon>Bacteria</taxon>
        <taxon>Bacillati</taxon>
        <taxon>Bacillota</taxon>
        <taxon>Bacilli</taxon>
        <taxon>Bacillales</taxon>
        <taxon>Staphylococcaceae</taxon>
        <taxon>Staphylococcus</taxon>
    </lineage>
</organism>
<reference key="1">
    <citation type="journal article" date="2003" name="Mol. Microbiol.">
        <title>Genome-based analysis of virulence genes in a non-biofilm-forming Staphylococcus epidermidis strain (ATCC 12228).</title>
        <authorList>
            <person name="Zhang Y.-Q."/>
            <person name="Ren S.-X."/>
            <person name="Li H.-L."/>
            <person name="Wang Y.-X."/>
            <person name="Fu G."/>
            <person name="Yang J."/>
            <person name="Qin Z.-Q."/>
            <person name="Miao Y.-G."/>
            <person name="Wang W.-Y."/>
            <person name="Chen R.-S."/>
            <person name="Shen Y."/>
            <person name="Chen Z."/>
            <person name="Yuan Z.-H."/>
            <person name="Zhao G.-P."/>
            <person name="Qu D."/>
            <person name="Danchin A."/>
            <person name="Wen Y.-M."/>
        </authorList>
    </citation>
    <scope>NUCLEOTIDE SEQUENCE [LARGE SCALE GENOMIC DNA]</scope>
    <source>
        <strain>ATCC 12228 / FDA PCI 1200</strain>
    </source>
</reference>
<comment type="catalytic activity">
    <reaction evidence="1">
        <text>D-tagatofuranose 1,6-bisphosphate = D-glyceraldehyde 3-phosphate + dihydroxyacetone phosphate</text>
        <dbReference type="Rhea" id="RHEA:22948"/>
        <dbReference type="ChEBI" id="CHEBI:57642"/>
        <dbReference type="ChEBI" id="CHEBI:58694"/>
        <dbReference type="ChEBI" id="CHEBI:59776"/>
        <dbReference type="EC" id="4.1.2.40"/>
    </reaction>
</comment>
<comment type="pathway">
    <text evidence="1">Carbohydrate metabolism; D-tagatose 6-phosphate degradation; D-glyceraldehyde 3-phosphate and glycerone phosphate from D-tagatose 6-phosphate: step 2/2.</text>
</comment>
<comment type="similarity">
    <text evidence="1">Belongs to the aldolase LacD family.</text>
</comment>
<accession>Q8CNF5</accession>
<evidence type="ECO:0000255" key="1">
    <source>
        <dbReference type="HAMAP-Rule" id="MF_00734"/>
    </source>
</evidence>
<name>LACD_STAES</name>
<protein>
    <recommendedName>
        <fullName evidence="1">Tagatose 1,6-diphosphate aldolase</fullName>
        <ecNumber evidence="1">4.1.2.40</ecNumber>
    </recommendedName>
    <alternativeName>
        <fullName evidence="1">D-tagatose-1,6-bisphosphate aldolase</fullName>
    </alternativeName>
    <alternativeName>
        <fullName evidence="1">Tagatose-bisphosphate aldolase</fullName>
    </alternativeName>
</protein>
<gene>
    <name evidence="1" type="primary">lacD</name>
    <name type="ordered locus">SE_1784</name>
</gene>
<keyword id="KW-0423">Lactose metabolism</keyword>
<keyword id="KW-0456">Lyase</keyword>
<proteinExistence type="inferred from homology"/>
<sequence>MTKSQQKVSSIEKLSNQEGIISALAFDQRGALKRMMAEHQSETPTVEQIEQLKVLVSEELTQYASSILLDPEYGLPASDARNNDCGLLLAYEKTGYDVNAKGRLPDCLVEWSAKRLKEQGANAVKFLLYYDVDDTEEINIQKKAYIERIGSECVAEDIPFFLEVLTYDDNIPDNKSAEFAKVKPRKVNEAMKLFSEDCFNVDVLKVEVPVNMNFVEGFSEGEVVYTKEEAAQHFRDQDAATHLPYIYLSAGVSAELFQDTLKFAHDSGAQFNGVLCGRATWSGAVKVYIEEGEQAAREWLRTVGFKNIDDLNTVLKTTATSWKNK</sequence>